<organism>
    <name type="scientific">Aspergillus terreus (strain NIH 2624 / FGSC A1156)</name>
    <dbReference type="NCBI Taxonomy" id="341663"/>
    <lineage>
        <taxon>Eukaryota</taxon>
        <taxon>Fungi</taxon>
        <taxon>Dikarya</taxon>
        <taxon>Ascomycota</taxon>
        <taxon>Pezizomycotina</taxon>
        <taxon>Eurotiomycetes</taxon>
        <taxon>Eurotiomycetidae</taxon>
        <taxon>Eurotiales</taxon>
        <taxon>Aspergillaceae</taxon>
        <taxon>Aspergillus</taxon>
        <taxon>Aspergillus subgen. Circumdati</taxon>
    </lineage>
</organism>
<comment type="catalytic activity">
    <reaction>
        <text>carbamoyl phosphate + L-ornithine = L-citrulline + phosphate + H(+)</text>
        <dbReference type="Rhea" id="RHEA:19513"/>
        <dbReference type="ChEBI" id="CHEBI:15378"/>
        <dbReference type="ChEBI" id="CHEBI:43474"/>
        <dbReference type="ChEBI" id="CHEBI:46911"/>
        <dbReference type="ChEBI" id="CHEBI:57743"/>
        <dbReference type="ChEBI" id="CHEBI:58228"/>
        <dbReference type="EC" id="2.1.3.3"/>
    </reaction>
</comment>
<comment type="pathway">
    <text>Amino-acid biosynthesis; L-arginine biosynthesis; L-arginine from L-ornithine and carbamoyl phosphate: step 1/3.</text>
</comment>
<comment type="subunit">
    <text evidence="1">Homotrimer.</text>
</comment>
<comment type="subcellular location">
    <subcellularLocation>
        <location>Mitochondrion matrix</location>
    </subcellularLocation>
</comment>
<comment type="similarity">
    <text evidence="4">Belongs to the aspartate/ornithine carbamoyltransferase superfamily. OTCase family.</text>
</comment>
<protein>
    <recommendedName>
        <fullName>Ornithine carbamoyltransferase, mitochondrial</fullName>
        <ecNumber>2.1.3.3</ecNumber>
    </recommendedName>
    <alternativeName>
        <fullName>Ornithine transcarbamylase</fullName>
        <shortName>OTCase</shortName>
    </alternativeName>
</protein>
<proteinExistence type="inferred from homology"/>
<keyword id="KW-0028">Amino-acid biosynthesis</keyword>
<keyword id="KW-0055">Arginine biosynthesis</keyword>
<keyword id="KW-0496">Mitochondrion</keyword>
<keyword id="KW-1185">Reference proteome</keyword>
<keyword id="KW-0808">Transferase</keyword>
<keyword id="KW-0809">Transit peptide</keyword>
<accession>P0C2P3</accession>
<accession>Q00291</accession>
<accession>Q0CLE2</accession>
<feature type="transit peptide" description="Mitochondrion" evidence="3">
    <location>
        <begin position="1"/>
        <end position="24"/>
    </location>
</feature>
<feature type="chain" id="PRO_0000283715" description="Ornithine carbamoyltransferase, mitochondrial">
    <location>
        <begin position="25"/>
        <end position="361"/>
    </location>
</feature>
<feature type="active site" description="Proton acceptor" evidence="2">
    <location>
        <position position="315"/>
    </location>
</feature>
<feature type="binding site" evidence="2">
    <location>
        <begin position="89"/>
        <end position="92"/>
    </location>
    <ligand>
        <name>carbamoyl phosphate</name>
        <dbReference type="ChEBI" id="CHEBI:58228"/>
    </ligand>
</feature>
<feature type="binding site" evidence="2">
    <location>
        <position position="140"/>
    </location>
    <ligand>
        <name>carbamoyl phosphate</name>
        <dbReference type="ChEBI" id="CHEBI:58228"/>
    </ligand>
</feature>
<feature type="binding site" evidence="2">
    <location>
        <position position="167"/>
    </location>
    <ligand>
        <name>carbamoyl phosphate</name>
        <dbReference type="ChEBI" id="CHEBI:58228"/>
    </ligand>
</feature>
<feature type="binding site" evidence="2">
    <location>
        <position position="170"/>
    </location>
    <ligand>
        <name>carbamoyl phosphate</name>
        <dbReference type="ChEBI" id="CHEBI:58228"/>
    </ligand>
</feature>
<feature type="binding site" evidence="2">
    <location>
        <position position="207"/>
    </location>
    <ligand>
        <name>L-ornithine</name>
        <dbReference type="ChEBI" id="CHEBI:46911"/>
    </ligand>
</feature>
<feature type="binding site" evidence="2">
    <location>
        <position position="273"/>
    </location>
    <ligand>
        <name>L-ornithine</name>
        <dbReference type="ChEBI" id="CHEBI:46911"/>
    </ligand>
</feature>
<feature type="binding site" evidence="2">
    <location>
        <position position="277"/>
    </location>
    <ligand>
        <name>L-ornithine</name>
        <dbReference type="ChEBI" id="CHEBI:46911"/>
    </ligand>
</feature>
<feature type="binding site" evidence="2">
    <location>
        <position position="278"/>
    </location>
    <ligand>
        <name>L-ornithine</name>
        <dbReference type="ChEBI" id="CHEBI:46911"/>
    </ligand>
</feature>
<feature type="binding site" evidence="2">
    <location>
        <begin position="315"/>
        <end position="316"/>
    </location>
    <ligand>
        <name>carbamoyl phosphate</name>
        <dbReference type="ChEBI" id="CHEBI:58228"/>
    </ligand>
</feature>
<feature type="binding site" evidence="2">
    <location>
        <position position="342"/>
    </location>
    <ligand>
        <name>carbamoyl phosphate</name>
        <dbReference type="ChEBI" id="CHEBI:58228"/>
    </ligand>
</feature>
<name>OTC_ASPTN</name>
<evidence type="ECO:0000250" key="1"/>
<evidence type="ECO:0000250" key="2">
    <source>
        <dbReference type="UniProtKB" id="P00480"/>
    </source>
</evidence>
<evidence type="ECO:0000255" key="3"/>
<evidence type="ECO:0000305" key="4"/>
<dbReference type="EC" id="2.1.3.3"/>
<dbReference type="EMBL" id="CH476600">
    <property type="protein sequence ID" value="EAU34561.1"/>
    <property type="molecule type" value="Genomic_DNA"/>
</dbReference>
<dbReference type="RefSeq" id="XP_001214670.1">
    <property type="nucleotide sequence ID" value="XM_001214670.1"/>
</dbReference>
<dbReference type="SMR" id="P0C2P3"/>
<dbReference type="STRING" id="341663.P0C2P3"/>
<dbReference type="EnsemblFungi" id="EAU34561">
    <property type="protein sequence ID" value="EAU34561"/>
    <property type="gene ID" value="ATEG_05492"/>
</dbReference>
<dbReference type="GeneID" id="4320971"/>
<dbReference type="VEuPathDB" id="FungiDB:ATEG_05492"/>
<dbReference type="eggNOG" id="KOG1504">
    <property type="taxonomic scope" value="Eukaryota"/>
</dbReference>
<dbReference type="HOGENOM" id="CLU_043846_3_0_1"/>
<dbReference type="OMA" id="DGNNVCN"/>
<dbReference type="OrthoDB" id="10252326at2759"/>
<dbReference type="UniPathway" id="UPA00068">
    <property type="reaction ID" value="UER00112"/>
</dbReference>
<dbReference type="Proteomes" id="UP000007963">
    <property type="component" value="Unassembled WGS sequence"/>
</dbReference>
<dbReference type="GO" id="GO:0005829">
    <property type="term" value="C:cytosol"/>
    <property type="evidence" value="ECO:0007669"/>
    <property type="project" value="EnsemblFungi"/>
</dbReference>
<dbReference type="GO" id="GO:0005759">
    <property type="term" value="C:mitochondrial matrix"/>
    <property type="evidence" value="ECO:0007669"/>
    <property type="project" value="UniProtKB-SubCell"/>
</dbReference>
<dbReference type="GO" id="GO:1903269">
    <property type="term" value="C:ornithine carbamoyltransferase inhibitor complex"/>
    <property type="evidence" value="ECO:0007669"/>
    <property type="project" value="EnsemblFungi"/>
</dbReference>
<dbReference type="GO" id="GO:0016597">
    <property type="term" value="F:amino acid binding"/>
    <property type="evidence" value="ECO:0007669"/>
    <property type="project" value="InterPro"/>
</dbReference>
<dbReference type="GO" id="GO:0004585">
    <property type="term" value="F:ornithine carbamoyltransferase activity"/>
    <property type="evidence" value="ECO:0007669"/>
    <property type="project" value="UniProtKB-EC"/>
</dbReference>
<dbReference type="GO" id="GO:0042450">
    <property type="term" value="P:arginine biosynthetic process via ornithine"/>
    <property type="evidence" value="ECO:0007669"/>
    <property type="project" value="EnsemblFungi"/>
</dbReference>
<dbReference type="GO" id="GO:0019240">
    <property type="term" value="P:citrulline biosynthetic process"/>
    <property type="evidence" value="ECO:0007669"/>
    <property type="project" value="TreeGrafter"/>
</dbReference>
<dbReference type="GO" id="GO:0006526">
    <property type="term" value="P:L-arginine biosynthetic process"/>
    <property type="evidence" value="ECO:0007669"/>
    <property type="project" value="UniProtKB-UniPathway"/>
</dbReference>
<dbReference type="FunFam" id="3.40.50.1370:FF:000017">
    <property type="entry name" value="Ornithine carbamoyltransferase"/>
    <property type="match status" value="1"/>
</dbReference>
<dbReference type="FunFam" id="3.40.50.1370:FF:000009">
    <property type="entry name" value="Ornithine carbamoyltransferase, mitochondrial"/>
    <property type="match status" value="1"/>
</dbReference>
<dbReference type="Gene3D" id="3.40.50.1370">
    <property type="entry name" value="Aspartate/ornithine carbamoyltransferase"/>
    <property type="match status" value="2"/>
</dbReference>
<dbReference type="InterPro" id="IPR006132">
    <property type="entry name" value="Asp/Orn_carbamoyltranf_P-bd"/>
</dbReference>
<dbReference type="InterPro" id="IPR006130">
    <property type="entry name" value="Asp/Orn_carbamoylTrfase"/>
</dbReference>
<dbReference type="InterPro" id="IPR036901">
    <property type="entry name" value="Asp/Orn_carbamoylTrfase_sf"/>
</dbReference>
<dbReference type="InterPro" id="IPR006131">
    <property type="entry name" value="Asp_carbamoyltransf_Asp/Orn-bd"/>
</dbReference>
<dbReference type="InterPro" id="IPR002292">
    <property type="entry name" value="Orn/put_carbamltrans"/>
</dbReference>
<dbReference type="NCBIfam" id="TIGR00658">
    <property type="entry name" value="orni_carb_tr"/>
    <property type="match status" value="1"/>
</dbReference>
<dbReference type="NCBIfam" id="NF001986">
    <property type="entry name" value="PRK00779.1"/>
    <property type="match status" value="1"/>
</dbReference>
<dbReference type="PANTHER" id="PTHR45753">
    <property type="entry name" value="ORNITHINE CARBAMOYLTRANSFERASE, MITOCHONDRIAL"/>
    <property type="match status" value="1"/>
</dbReference>
<dbReference type="PANTHER" id="PTHR45753:SF3">
    <property type="entry name" value="ORNITHINE TRANSCARBAMYLASE, MITOCHONDRIAL"/>
    <property type="match status" value="1"/>
</dbReference>
<dbReference type="Pfam" id="PF00185">
    <property type="entry name" value="OTCace"/>
    <property type="match status" value="1"/>
</dbReference>
<dbReference type="Pfam" id="PF02729">
    <property type="entry name" value="OTCace_N"/>
    <property type="match status" value="1"/>
</dbReference>
<dbReference type="PRINTS" id="PR00100">
    <property type="entry name" value="AOTCASE"/>
</dbReference>
<dbReference type="PRINTS" id="PR00102">
    <property type="entry name" value="OTCASE"/>
</dbReference>
<dbReference type="SUPFAM" id="SSF53671">
    <property type="entry name" value="Aspartate/ornithine carbamoyltransferase"/>
    <property type="match status" value="1"/>
</dbReference>
<dbReference type="PROSITE" id="PS00097">
    <property type="entry name" value="CARBAMOYLTRANSFERASE"/>
    <property type="match status" value="1"/>
</dbReference>
<gene>
    <name type="primary">arg1</name>
    <name type="synonym">arg-1</name>
    <name type="ORF">ATEG_05492</name>
</gene>
<reference key="1">
    <citation type="submission" date="2005-09" db="EMBL/GenBank/DDBJ databases">
        <title>Annotation of the Aspergillus terreus NIH2624 genome.</title>
        <authorList>
            <person name="Birren B.W."/>
            <person name="Lander E.S."/>
            <person name="Galagan J.E."/>
            <person name="Nusbaum C."/>
            <person name="Devon K."/>
            <person name="Henn M."/>
            <person name="Ma L.-J."/>
            <person name="Jaffe D.B."/>
            <person name="Butler J."/>
            <person name="Alvarez P."/>
            <person name="Gnerre S."/>
            <person name="Grabherr M."/>
            <person name="Kleber M."/>
            <person name="Mauceli E.W."/>
            <person name="Brockman W."/>
            <person name="Rounsley S."/>
            <person name="Young S.K."/>
            <person name="LaButti K."/>
            <person name="Pushparaj V."/>
            <person name="DeCaprio D."/>
            <person name="Crawford M."/>
            <person name="Koehrsen M."/>
            <person name="Engels R."/>
            <person name="Montgomery P."/>
            <person name="Pearson M."/>
            <person name="Howarth C."/>
            <person name="Larson L."/>
            <person name="Luoma S."/>
            <person name="White J."/>
            <person name="Alvarado L."/>
            <person name="Kodira C.D."/>
            <person name="Zeng Q."/>
            <person name="Oleary S."/>
            <person name="Yandava C."/>
            <person name="Denning D.W."/>
            <person name="Nierman W.C."/>
            <person name="Milne T."/>
            <person name="Madden K."/>
        </authorList>
    </citation>
    <scope>NUCLEOTIDE SEQUENCE [LARGE SCALE GENOMIC DNA]</scope>
    <source>
        <strain>NIH 2624 / FGSC A1156</strain>
    </source>
</reference>
<sequence length="361" mass="39129">MIPTARCGALRQKIPVQAVRQYSSSTTLKTSPFAPRHLLSIADLTPTEFTTLVRNASSHKHSIKSGSIPTNLQGSLAGKTVAMMFSKRSTRTRISTEGATVQLGGHPMFLGKDDIQLGVNESLYDTAVVVSSMVSAIVARVGKHAEVADLAKHSTVPVINALCDSFHPLQAIADFQTIYETFTPKAHHLSSLGLEGLKIAWVGDANNVLFDMAISAAKMGVDLAVATPKGYEIPASMRELIQEAGKGVANPGKLIQTNVPEEAVKKADILVTDTWVSMGQEEESLKRMKAFEGFQITSELAKRGGANENWKFMHCLPRHPEEVSDEVFYSNRSLVFPEAENRLWAAISALEGFVVNKGKIA</sequence>